<name>C76K1_SALMI</name>
<feature type="chain" id="PRO_0000452247" description="11-hydroxysugiol 20-monooxygenase">
    <location>
        <begin position="1"/>
        <end position="503"/>
    </location>
</feature>
<feature type="transmembrane region" description="Helical" evidence="2">
    <location>
        <begin position="2"/>
        <end position="22"/>
    </location>
</feature>
<feature type="binding site" description="axial binding residue" evidence="1">
    <location>
        <position position="446"/>
    </location>
    <ligand>
        <name>heme</name>
        <dbReference type="ChEBI" id="CHEBI:30413"/>
    </ligand>
    <ligandPart>
        <name>Fe</name>
        <dbReference type="ChEBI" id="CHEBI:18248"/>
    </ligandPart>
</feature>
<protein>
    <recommendedName>
        <fullName evidence="5">11-hydroxysugiol 20-monooxygenase</fullName>
        <ecNumber evidence="3">1.14.14.67</ecNumber>
    </recommendedName>
    <alternativeName>
        <fullName evidence="4">Cytochrome P450 76AK1</fullName>
    </alternativeName>
</protein>
<sequence length="503" mass="56234">MQVLIVASLAFLAAWLVYSRWSDSRRRRGGGGSLPPGPPRLPIIGNMHQLGPNPHKSLAHLAKTYGPLMSLKLGNQLAVVASSPEMAREVLIKQGVALCRPFTPNAVCIHGHGEVSVLMLPATSNIWKRIRRIAREKLFSNPALQGTQDIRRERLRKLTDYAAGCSREGRAMNVGEATFTTMSNLMFATLFSIELTEYGASDAGANRKFREHVNAITTNMGVPNVADFFPIFAPLDPQGLRRKLTHHLGSLLELVQNLIDQRLQARDSSDYRKKKDFLDTLLDLSQGNEYDLSIKEIKHFFVDIIIAGSDTSAATAEWGMVELLLHPDKLEKLKAEMKSVVGEKSIVEESDIARLPYLRATVNEVFRLHPAAPLLAPHVAEEEARVNEYIIPKDTKVFVNVWAITRDPSIWKNPDSFEPERFLESDINFEGQHFELIPFGSGRRSCPGIPLASRMLHCMVGTLCHNFDWELEKGAESKQLQRQDVFGLALQKKVPLKAIPVKV</sequence>
<keyword id="KW-0349">Heme</keyword>
<keyword id="KW-0408">Iron</keyword>
<keyword id="KW-0472">Membrane</keyword>
<keyword id="KW-0479">Metal-binding</keyword>
<keyword id="KW-0503">Monooxygenase</keyword>
<keyword id="KW-0560">Oxidoreductase</keyword>
<keyword id="KW-0812">Transmembrane</keyword>
<keyword id="KW-1133">Transmembrane helix</keyword>
<dbReference type="EC" id="1.14.14.67" evidence="3"/>
<dbReference type="EMBL" id="KR140169">
    <property type="protein sequence ID" value="AMB36497.1"/>
    <property type="molecule type" value="mRNA"/>
</dbReference>
<dbReference type="SMR" id="A0A125QZE2"/>
<dbReference type="KEGG" id="ag:AMB36497"/>
<dbReference type="OrthoDB" id="1470350at2759"/>
<dbReference type="BRENDA" id="1.14.14.67">
    <property type="organism ID" value="9850"/>
</dbReference>
<dbReference type="UniPathway" id="UPA00213"/>
<dbReference type="GO" id="GO:0016020">
    <property type="term" value="C:membrane"/>
    <property type="evidence" value="ECO:0007669"/>
    <property type="project" value="UniProtKB-SubCell"/>
</dbReference>
<dbReference type="GO" id="GO:0020037">
    <property type="term" value="F:heme binding"/>
    <property type="evidence" value="ECO:0007669"/>
    <property type="project" value="InterPro"/>
</dbReference>
<dbReference type="GO" id="GO:0005506">
    <property type="term" value="F:iron ion binding"/>
    <property type="evidence" value="ECO:0007669"/>
    <property type="project" value="InterPro"/>
</dbReference>
<dbReference type="GO" id="GO:0016712">
    <property type="term" value="F:oxidoreductase activity, acting on paired donors, with incorporation or reduction of molecular oxygen, reduced flavin or flavoprotein as one donor, and incorporation of one atom of oxygen"/>
    <property type="evidence" value="ECO:0000314"/>
    <property type="project" value="UniProtKB"/>
</dbReference>
<dbReference type="GO" id="GO:0016114">
    <property type="term" value="P:terpenoid biosynthetic process"/>
    <property type="evidence" value="ECO:0000314"/>
    <property type="project" value="UniProtKB"/>
</dbReference>
<dbReference type="CDD" id="cd11073">
    <property type="entry name" value="CYP76-like"/>
    <property type="match status" value="1"/>
</dbReference>
<dbReference type="FunFam" id="1.10.630.10:FF:000007">
    <property type="entry name" value="Cytochrome P450 76C4"/>
    <property type="match status" value="1"/>
</dbReference>
<dbReference type="Gene3D" id="1.10.630.10">
    <property type="entry name" value="Cytochrome P450"/>
    <property type="match status" value="1"/>
</dbReference>
<dbReference type="InterPro" id="IPR001128">
    <property type="entry name" value="Cyt_P450"/>
</dbReference>
<dbReference type="InterPro" id="IPR017972">
    <property type="entry name" value="Cyt_P450_CS"/>
</dbReference>
<dbReference type="InterPro" id="IPR002401">
    <property type="entry name" value="Cyt_P450_E_grp-I"/>
</dbReference>
<dbReference type="InterPro" id="IPR036396">
    <property type="entry name" value="Cyt_P450_sf"/>
</dbReference>
<dbReference type="PANTHER" id="PTHR47950">
    <property type="entry name" value="CYTOCHROME P450, FAMILY 76, SUBFAMILY C, POLYPEPTIDE 5-RELATED"/>
    <property type="match status" value="1"/>
</dbReference>
<dbReference type="PANTHER" id="PTHR47950:SF4">
    <property type="entry name" value="GERANIOL 8-HYDROXYLASE-LIKE"/>
    <property type="match status" value="1"/>
</dbReference>
<dbReference type="Pfam" id="PF00067">
    <property type="entry name" value="p450"/>
    <property type="match status" value="1"/>
</dbReference>
<dbReference type="PRINTS" id="PR00463">
    <property type="entry name" value="EP450I"/>
</dbReference>
<dbReference type="PRINTS" id="PR00385">
    <property type="entry name" value="P450"/>
</dbReference>
<dbReference type="SUPFAM" id="SSF48264">
    <property type="entry name" value="Cytochrome P450"/>
    <property type="match status" value="1"/>
</dbReference>
<dbReference type="PROSITE" id="PS00086">
    <property type="entry name" value="CYTOCHROME_P450"/>
    <property type="match status" value="1"/>
</dbReference>
<gene>
    <name evidence="4" type="primary">CYP76AK1</name>
</gene>
<accession>A0A125QZE2</accession>
<comment type="function">
    <text evidence="3">Monooxygenase that oxidizes 11-hydroxysugiol to produce 11,20-dihydroxysugiol (PubMed:26682704). Can oxidize 11-hydroxyferruginol to produce 11,20-dihydroxyferruginol (PubMed:26682704). These products are intermediates in tanshinone biosynthesis (PubMed:26682704).</text>
</comment>
<comment type="catalytic activity">
    <reaction evidence="3">
        <text>11-hydroxysugiol + reduced [NADPH--hemoprotein reductase] + O2 = 11,20-dihydroxysugiol + oxidized [NADPH--hemoprotein reductase] + H2O + H(+)</text>
        <dbReference type="Rhea" id="RHEA:55464"/>
        <dbReference type="Rhea" id="RHEA-COMP:11964"/>
        <dbReference type="Rhea" id="RHEA-COMP:11965"/>
        <dbReference type="ChEBI" id="CHEBI:15377"/>
        <dbReference type="ChEBI" id="CHEBI:15378"/>
        <dbReference type="ChEBI" id="CHEBI:15379"/>
        <dbReference type="ChEBI" id="CHEBI:57618"/>
        <dbReference type="ChEBI" id="CHEBI:58210"/>
        <dbReference type="ChEBI" id="CHEBI:138962"/>
        <dbReference type="ChEBI" id="CHEBI:138963"/>
        <dbReference type="EC" id="1.14.14.67"/>
    </reaction>
    <physiologicalReaction direction="left-to-right" evidence="3">
        <dbReference type="Rhea" id="RHEA:55465"/>
    </physiologicalReaction>
</comment>
<comment type="catalytic activity">
    <reaction evidence="3">
        <text>11-hydroxyferruginol + reduced [NADPH--hemoprotein reductase] + O2 = 11,20-dihydroxyferruginol + oxidized [NADPH--hemoprotein reductase] + H2O + H(+)</text>
        <dbReference type="Rhea" id="RHEA:55468"/>
        <dbReference type="Rhea" id="RHEA-COMP:11964"/>
        <dbReference type="Rhea" id="RHEA-COMP:11965"/>
        <dbReference type="ChEBI" id="CHEBI:15377"/>
        <dbReference type="ChEBI" id="CHEBI:15378"/>
        <dbReference type="ChEBI" id="CHEBI:15379"/>
        <dbReference type="ChEBI" id="CHEBI:57618"/>
        <dbReference type="ChEBI" id="CHEBI:58210"/>
        <dbReference type="ChEBI" id="CHEBI:138942"/>
        <dbReference type="ChEBI" id="CHEBI:138965"/>
        <dbReference type="EC" id="1.14.14.67"/>
    </reaction>
    <physiologicalReaction direction="left-to-right" evidence="3">
        <dbReference type="Rhea" id="RHEA:55469"/>
    </physiologicalReaction>
</comment>
<comment type="cofactor">
    <cofactor evidence="1">
        <name>heme</name>
        <dbReference type="ChEBI" id="CHEBI:30413"/>
    </cofactor>
</comment>
<comment type="pathway">
    <text evidence="5">Secondary metabolite biosynthesis; terpenoid biosynthesis.</text>
</comment>
<comment type="subcellular location">
    <subcellularLocation>
        <location evidence="2">Membrane</location>
        <topology evidence="2">Single-pass membrane protein</topology>
    </subcellularLocation>
</comment>
<comment type="tissue specificity">
    <text evidence="3">Highly expressed in roots.</text>
</comment>
<comment type="similarity">
    <text evidence="5">Belongs to the cytochrome P450 family.</text>
</comment>
<proteinExistence type="evidence at protein level"/>
<reference key="1">
    <citation type="journal article" date="2016" name="New Phytol.">
        <title>Cytochrome P450 promiscuity leads to a bifurcating biosynthetic pathway for tanshinones.</title>
        <authorList>
            <person name="Guo J."/>
            <person name="Ma X."/>
            <person name="Cai Y."/>
            <person name="Ma Y."/>
            <person name="Zhan Z."/>
            <person name="Zhou Y.J."/>
            <person name="Liu W."/>
            <person name="Guan M."/>
            <person name="Yang J."/>
            <person name="Cui G."/>
            <person name="Kang L."/>
            <person name="Yang L."/>
            <person name="Shen Y."/>
            <person name="Tang J."/>
            <person name="Lin H."/>
            <person name="Ma X."/>
            <person name="Jin B."/>
            <person name="Liu Z."/>
            <person name="Peters R.J."/>
            <person name="Zhao Z.K."/>
            <person name="Huang L."/>
        </authorList>
    </citation>
    <scope>NUCLEOTIDE SEQUENCE [MRNA]</scope>
    <scope>FUNCTION</scope>
    <scope>CATALYTIC ACTIVITY</scope>
    <scope>TISSUE SPECIFICITY</scope>
</reference>
<evidence type="ECO:0000250" key="1">
    <source>
        <dbReference type="UniProtKB" id="Q94IP1"/>
    </source>
</evidence>
<evidence type="ECO:0000255" key="2"/>
<evidence type="ECO:0000269" key="3">
    <source>
    </source>
</evidence>
<evidence type="ECO:0000303" key="4">
    <source>
    </source>
</evidence>
<evidence type="ECO:0000305" key="5"/>
<organism>
    <name type="scientific">Salvia miltiorrhiza</name>
    <name type="common">Chinese sage</name>
    <dbReference type="NCBI Taxonomy" id="226208"/>
    <lineage>
        <taxon>Eukaryota</taxon>
        <taxon>Viridiplantae</taxon>
        <taxon>Streptophyta</taxon>
        <taxon>Embryophyta</taxon>
        <taxon>Tracheophyta</taxon>
        <taxon>Spermatophyta</taxon>
        <taxon>Magnoliopsida</taxon>
        <taxon>eudicotyledons</taxon>
        <taxon>Gunneridae</taxon>
        <taxon>Pentapetalae</taxon>
        <taxon>asterids</taxon>
        <taxon>lamiids</taxon>
        <taxon>Lamiales</taxon>
        <taxon>Lamiaceae</taxon>
        <taxon>Nepetoideae</taxon>
        <taxon>Mentheae</taxon>
        <taxon>Salviinae</taxon>
        <taxon>Salvia</taxon>
        <taxon>Salvia incertae sedis</taxon>
    </lineage>
</organism>